<accession>Q64620</accession>
<accession>Q6AZ47</accession>
<reference key="1">
    <citation type="journal article" date="1994" name="J. Biol. Chem.">
        <title>Molecular cloning of a protein serine/threonine phosphatase containing a putative regulatory tetratricopeptide repeat domain.</title>
        <authorList>
            <person name="Becker W."/>
            <person name="Kentrup H."/>
            <person name="Klumpp S."/>
            <person name="Schultz J.E."/>
            <person name="Joost H.G."/>
        </authorList>
    </citation>
    <scope>NUCLEOTIDE SEQUENCE [MRNA]</scope>
    <scope>TISSUE SPECIFICITY</scope>
    <source>
        <strain>Sprague-Dawley</strain>
        <tissue>Brain</tissue>
        <tissue>Testis</tissue>
    </source>
</reference>
<reference key="2">
    <citation type="journal article" date="2004" name="Genome Res.">
        <title>The status, quality, and expansion of the NIH full-length cDNA project: the Mammalian Gene Collection (MGC).</title>
        <authorList>
            <consortium name="The MGC Project Team"/>
        </authorList>
    </citation>
    <scope>NUCLEOTIDE SEQUENCE [LARGE SCALE MRNA]</scope>
    <source>
        <strain>Brown Norway</strain>
        <tissue>Testis</tissue>
    </source>
</reference>
<protein>
    <recommendedName>
        <fullName evidence="5">Serine/threonine-protein phosphatase 6 catalytic subunit</fullName>
        <shortName evidence="1">PP6C</shortName>
        <ecNumber evidence="1">3.1.3.16</ecNumber>
    </recommendedName>
    <alternativeName>
        <fullName evidence="4">Protein phosphatase V</fullName>
        <shortName evidence="4">PP-V</shortName>
    </alternativeName>
</protein>
<feature type="chain" id="PRO_0000058879" description="Serine/threonine-protein phosphatase 6 catalytic subunit">
    <location>
        <begin position="1"/>
        <end position="305"/>
    </location>
</feature>
<feature type="active site" description="Proton donor" evidence="2">
    <location>
        <position position="114"/>
    </location>
</feature>
<feature type="binding site" evidence="2">
    <location>
        <position position="53"/>
    </location>
    <ligand>
        <name>Mn(2+)</name>
        <dbReference type="ChEBI" id="CHEBI:29035"/>
        <label>1</label>
    </ligand>
</feature>
<feature type="binding site" evidence="2">
    <location>
        <position position="55"/>
    </location>
    <ligand>
        <name>Mn(2+)</name>
        <dbReference type="ChEBI" id="CHEBI:29035"/>
        <label>1</label>
    </ligand>
</feature>
<feature type="binding site" evidence="2">
    <location>
        <position position="81"/>
    </location>
    <ligand>
        <name>Mn(2+)</name>
        <dbReference type="ChEBI" id="CHEBI:29035"/>
        <label>1</label>
    </ligand>
</feature>
<feature type="binding site" evidence="2">
    <location>
        <position position="81"/>
    </location>
    <ligand>
        <name>Mn(2+)</name>
        <dbReference type="ChEBI" id="CHEBI:29035"/>
        <label>2</label>
    </ligand>
</feature>
<feature type="binding site" evidence="2">
    <location>
        <position position="113"/>
    </location>
    <ligand>
        <name>Mn(2+)</name>
        <dbReference type="ChEBI" id="CHEBI:29035"/>
        <label>2</label>
    </ligand>
</feature>
<feature type="binding site" evidence="2">
    <location>
        <position position="163"/>
    </location>
    <ligand>
        <name>Mn(2+)</name>
        <dbReference type="ChEBI" id="CHEBI:29035"/>
        <label>2</label>
    </ligand>
</feature>
<feature type="binding site" evidence="2">
    <location>
        <position position="237"/>
    </location>
    <ligand>
        <name>Mn(2+)</name>
        <dbReference type="ChEBI" id="CHEBI:29035"/>
        <label>2</label>
    </ligand>
</feature>
<feature type="modified residue" description="N-acetylmethionine" evidence="1">
    <location>
        <position position="1"/>
    </location>
</feature>
<feature type="sequence conflict" description="In Ref. 1; CAA54453." evidence="5" ref="1">
    <original>P</original>
    <variation>L</variation>
    <location>
        <position position="72"/>
    </location>
</feature>
<feature type="sequence conflict" description="In Ref. 1; CAA54453." evidence="5" ref="1">
    <original>Y</original>
    <variation>H</variation>
    <location>
        <position position="87"/>
    </location>
</feature>
<feature type="sequence conflict" description="In Ref. 1; CAA54453." evidence="5" ref="1">
    <original>E</original>
    <variation>V</variation>
    <location>
        <position position="91"/>
    </location>
</feature>
<feature type="sequence conflict" description="In Ref. 1; CAA54453." evidence="5" ref="1">
    <original>F</original>
    <variation>N</variation>
    <location>
        <position position="285"/>
    </location>
</feature>
<gene>
    <name evidence="6" type="primary">Ppp6c</name>
    <name evidence="4" type="synonym">Ppv</name>
</gene>
<evidence type="ECO:0000250" key="1">
    <source>
        <dbReference type="UniProtKB" id="O00743"/>
    </source>
</evidence>
<evidence type="ECO:0000250" key="2">
    <source>
        <dbReference type="UniProtKB" id="P36873"/>
    </source>
</evidence>
<evidence type="ECO:0000269" key="3">
    <source>
    </source>
</evidence>
<evidence type="ECO:0000303" key="4">
    <source>
    </source>
</evidence>
<evidence type="ECO:0000305" key="5"/>
<evidence type="ECO:0000312" key="6">
    <source>
        <dbReference type="RGD" id="708460"/>
    </source>
</evidence>
<organism>
    <name type="scientific">Rattus norvegicus</name>
    <name type="common">Rat</name>
    <dbReference type="NCBI Taxonomy" id="10116"/>
    <lineage>
        <taxon>Eukaryota</taxon>
        <taxon>Metazoa</taxon>
        <taxon>Chordata</taxon>
        <taxon>Craniata</taxon>
        <taxon>Vertebrata</taxon>
        <taxon>Euteleostomi</taxon>
        <taxon>Mammalia</taxon>
        <taxon>Eutheria</taxon>
        <taxon>Euarchontoglires</taxon>
        <taxon>Glires</taxon>
        <taxon>Rodentia</taxon>
        <taxon>Myomorpha</taxon>
        <taxon>Muroidea</taxon>
        <taxon>Muridae</taxon>
        <taxon>Murinae</taxon>
        <taxon>Rattus</taxon>
    </lineage>
</organism>
<keyword id="KW-0007">Acetylation</keyword>
<keyword id="KW-0131">Cell cycle</keyword>
<keyword id="KW-0963">Cytoplasm</keyword>
<keyword id="KW-0378">Hydrolase</keyword>
<keyword id="KW-0391">Immunity</keyword>
<keyword id="KW-0399">Innate immunity</keyword>
<keyword id="KW-0464">Manganese</keyword>
<keyword id="KW-0479">Metal-binding</keyword>
<keyword id="KW-0496">Mitochondrion</keyword>
<keyword id="KW-0904">Protein phosphatase</keyword>
<keyword id="KW-1185">Reference proteome</keyword>
<name>PPP6_RAT</name>
<dbReference type="EC" id="3.1.3.16" evidence="1"/>
<dbReference type="EMBL" id="X77236">
    <property type="protein sequence ID" value="CAA54453.1"/>
    <property type="molecule type" value="mRNA"/>
</dbReference>
<dbReference type="EMBL" id="BC078747">
    <property type="protein sequence ID" value="AAH78747.1"/>
    <property type="molecule type" value="mRNA"/>
</dbReference>
<dbReference type="PIR" id="B55346">
    <property type="entry name" value="B55346"/>
</dbReference>
<dbReference type="RefSeq" id="NP_598273.2">
    <property type="nucleotide sequence ID" value="NM_133589.2"/>
</dbReference>
<dbReference type="SMR" id="Q64620"/>
<dbReference type="BioGRID" id="251128">
    <property type="interactions" value="2"/>
</dbReference>
<dbReference type="FunCoup" id="Q64620">
    <property type="interactions" value="4943"/>
</dbReference>
<dbReference type="IntAct" id="Q64620">
    <property type="interactions" value="3"/>
</dbReference>
<dbReference type="MINT" id="Q64620"/>
<dbReference type="STRING" id="10116.ENSRNOP00000021176"/>
<dbReference type="PhosphoSitePlus" id="Q64620"/>
<dbReference type="jPOST" id="Q64620"/>
<dbReference type="PaxDb" id="10116-ENSRNOP00000021176"/>
<dbReference type="Ensembl" id="ENSRNOT00000102106.1">
    <property type="protein sequence ID" value="ENSRNOP00000094628.1"/>
    <property type="gene ID" value="ENSRNOG00000015145.5"/>
</dbReference>
<dbReference type="GeneID" id="171121"/>
<dbReference type="KEGG" id="rno:171121"/>
<dbReference type="UCSC" id="RGD:708460">
    <property type="organism name" value="rat"/>
</dbReference>
<dbReference type="AGR" id="RGD:708460"/>
<dbReference type="CTD" id="5537"/>
<dbReference type="RGD" id="708460">
    <property type="gene designation" value="Ppp6c"/>
</dbReference>
<dbReference type="eggNOG" id="KOG0373">
    <property type="taxonomic scope" value="Eukaryota"/>
</dbReference>
<dbReference type="GeneTree" id="ENSGT00550000074961"/>
<dbReference type="HOGENOM" id="CLU_004962_8_1_1"/>
<dbReference type="InParanoid" id="Q64620"/>
<dbReference type="OMA" id="MCLKVKY"/>
<dbReference type="OrthoDB" id="1930084at2759"/>
<dbReference type="PhylomeDB" id="Q64620"/>
<dbReference type="TreeFam" id="TF105563"/>
<dbReference type="Reactome" id="R-RNO-171319">
    <property type="pathway name" value="Telomere Extension By Telomerase"/>
</dbReference>
<dbReference type="Reactome" id="R-RNO-204005">
    <property type="pathway name" value="COPII-mediated vesicle transport"/>
</dbReference>
<dbReference type="PRO" id="PR:Q64620"/>
<dbReference type="Proteomes" id="UP000002494">
    <property type="component" value="Chromosome 3"/>
</dbReference>
<dbReference type="Bgee" id="ENSRNOG00000015145">
    <property type="expression patterns" value="Expressed in skeletal muscle tissue and 19 other cell types or tissues"/>
</dbReference>
<dbReference type="GO" id="GO:0005737">
    <property type="term" value="C:cytoplasm"/>
    <property type="evidence" value="ECO:0000318"/>
    <property type="project" value="GO_Central"/>
</dbReference>
<dbReference type="GO" id="GO:0005829">
    <property type="term" value="C:cytosol"/>
    <property type="evidence" value="ECO:0000266"/>
    <property type="project" value="RGD"/>
</dbReference>
<dbReference type="GO" id="GO:0005739">
    <property type="term" value="C:mitochondrion"/>
    <property type="evidence" value="ECO:0007669"/>
    <property type="project" value="UniProtKB-SubCell"/>
</dbReference>
<dbReference type="GO" id="GO:0046872">
    <property type="term" value="F:metal ion binding"/>
    <property type="evidence" value="ECO:0007669"/>
    <property type="project" value="UniProtKB-KW"/>
</dbReference>
<dbReference type="GO" id="GO:0004722">
    <property type="term" value="F:protein serine/threonine phosphatase activity"/>
    <property type="evidence" value="ECO:0000315"/>
    <property type="project" value="RGD"/>
</dbReference>
<dbReference type="GO" id="GO:0000082">
    <property type="term" value="P:G1/S transition of mitotic cell cycle"/>
    <property type="evidence" value="ECO:0000318"/>
    <property type="project" value="GO_Central"/>
</dbReference>
<dbReference type="GO" id="GO:0045087">
    <property type="term" value="P:innate immune response"/>
    <property type="evidence" value="ECO:0007669"/>
    <property type="project" value="UniProtKB-KW"/>
</dbReference>
<dbReference type="GO" id="GO:0160049">
    <property type="term" value="P:negative regulation of cGAS/STING signaling pathway"/>
    <property type="evidence" value="ECO:0000266"/>
    <property type="project" value="RGD"/>
</dbReference>
<dbReference type="CDD" id="cd07415">
    <property type="entry name" value="MPP_PP2A_PP4_PP6"/>
    <property type="match status" value="1"/>
</dbReference>
<dbReference type="FunFam" id="3.60.21.10:FF:000005">
    <property type="entry name" value="Serine/threonine-protein phosphatase"/>
    <property type="match status" value="1"/>
</dbReference>
<dbReference type="Gene3D" id="3.60.21.10">
    <property type="match status" value="1"/>
</dbReference>
<dbReference type="InterPro" id="IPR004843">
    <property type="entry name" value="Calcineurin-like_PHP_ApaH"/>
</dbReference>
<dbReference type="InterPro" id="IPR029052">
    <property type="entry name" value="Metallo-depent_PP-like"/>
</dbReference>
<dbReference type="InterPro" id="IPR047129">
    <property type="entry name" value="PPA2-like"/>
</dbReference>
<dbReference type="InterPro" id="IPR006186">
    <property type="entry name" value="Ser/Thr-sp_prot-phosphatase"/>
</dbReference>
<dbReference type="PANTHER" id="PTHR45619">
    <property type="entry name" value="SERINE/THREONINE-PROTEIN PHOSPHATASE PP2A-RELATED"/>
    <property type="match status" value="1"/>
</dbReference>
<dbReference type="Pfam" id="PF00149">
    <property type="entry name" value="Metallophos"/>
    <property type="match status" value="1"/>
</dbReference>
<dbReference type="PRINTS" id="PR00114">
    <property type="entry name" value="STPHPHTASE"/>
</dbReference>
<dbReference type="SMART" id="SM00156">
    <property type="entry name" value="PP2Ac"/>
    <property type="match status" value="1"/>
</dbReference>
<dbReference type="SUPFAM" id="SSF56300">
    <property type="entry name" value="Metallo-dependent phosphatases"/>
    <property type="match status" value="1"/>
</dbReference>
<dbReference type="PROSITE" id="PS00125">
    <property type="entry name" value="SER_THR_PHOSPHATASE"/>
    <property type="match status" value="1"/>
</dbReference>
<sequence length="305" mass="35159">MAPLDLDKYVEIARQCKYLPENDLKRLCDYVCDLLLEESNVQPVSTPVTVCGDIHGQFYDLCELFRTGGQVPDTNYIFMGDFVDRGYYSLETFTYLLALKAKWPDRITLLRGNHESRQITQVYGFYDECQTKYGNANAWRYCTKVFDMLTVAALIDEQILCVHGGLSPDIKTLDQIRTIERNQEIPHKGAFCDLVWSDPEDVDTWAISPRGAGWLFGAKVTNEFVHINNLKLICRAHQLVHEGYKFMFDEKLVTVWSAPNYCYRCGNIASIMVFKDVNTREPKLFRAVPDSERVIPPRTTTPYFL</sequence>
<proteinExistence type="evidence at transcript level"/>
<comment type="function">
    <text evidence="1">Catalytic subunit of protein phosphatase 6 (PP6). PP6 is a component of a signaling pathway regulating cell cycle progression in response to IL2 receptor stimulation. N-terminal domain restricts G1 to S phase progression in cancer cells, in part through control of cyclin D1. During mitosis, regulates spindle positioning. Down-regulates MAP3K7 kinase activation of the IL1 signaling pathway by dephosphorylation of MAP3K7. Also participates in the innate immune defense against viruses by desphosphorylating RIGI, an essential step that triggers RIG-I-mediated signaling activation.</text>
</comment>
<comment type="catalytic activity">
    <reaction evidence="1">
        <text>O-phospho-L-seryl-[protein] + H2O = L-seryl-[protein] + phosphate</text>
        <dbReference type="Rhea" id="RHEA:20629"/>
        <dbReference type="Rhea" id="RHEA-COMP:9863"/>
        <dbReference type="Rhea" id="RHEA-COMP:11604"/>
        <dbReference type="ChEBI" id="CHEBI:15377"/>
        <dbReference type="ChEBI" id="CHEBI:29999"/>
        <dbReference type="ChEBI" id="CHEBI:43474"/>
        <dbReference type="ChEBI" id="CHEBI:83421"/>
        <dbReference type="EC" id="3.1.3.16"/>
    </reaction>
</comment>
<comment type="catalytic activity">
    <reaction evidence="1">
        <text>O-phospho-L-threonyl-[protein] + H2O = L-threonyl-[protein] + phosphate</text>
        <dbReference type="Rhea" id="RHEA:47004"/>
        <dbReference type="Rhea" id="RHEA-COMP:11060"/>
        <dbReference type="Rhea" id="RHEA-COMP:11605"/>
        <dbReference type="ChEBI" id="CHEBI:15377"/>
        <dbReference type="ChEBI" id="CHEBI:30013"/>
        <dbReference type="ChEBI" id="CHEBI:43474"/>
        <dbReference type="ChEBI" id="CHEBI:61977"/>
        <dbReference type="EC" id="3.1.3.16"/>
    </reaction>
</comment>
<comment type="cofactor">
    <cofactor evidence="2">
        <name>Mn(2+)</name>
        <dbReference type="ChEBI" id="CHEBI:29035"/>
    </cofactor>
    <text evidence="2">Binds 2 manganese ions per subunit.</text>
</comment>
<comment type="subunit">
    <text evidence="1">Protein phosphatase 6 (PP6) holoenzyme is proposed to be a heterotrimeric complex formed by the catalytic subunit, a SAPS domain-containing subunit (PP6R) and an ankyrin repeat-domain containing regulatory subunit (ARS). Interacts with subunits PPP6R1, PPP6R2 and PPP6R3. Interacts with subunit ANKRD28. Interacts with IGBP1. Interacts with MAP3K7. Interacts with NFKBIE. Interacts with TRIM14 and WRNIP1; these interactions positively regulate the RIG-I signaling pathway.</text>
</comment>
<comment type="subcellular location">
    <subcellularLocation>
        <location evidence="1">Mitochondrion</location>
    </subcellularLocation>
    <subcellularLocation>
        <location evidence="1">Cytoplasm</location>
    </subcellularLocation>
</comment>
<comment type="tissue specificity">
    <text evidence="3">Highest levels found in spleen, brain and lung.</text>
</comment>
<comment type="similarity">
    <text evidence="5">Belongs to the PPP phosphatase family. PP-6 (PP-V) subfamily.</text>
</comment>